<keyword id="KW-0456">Lyase</keyword>
<keyword id="KW-1185">Reference proteome</keyword>
<reference key="1">
    <citation type="journal article" date="2014" name="Stand. Genomic Sci.">
        <title>Complete genome sequence of Burkholderia phymatum STM815(T), a broad host range and efficient nitrogen-fixing symbiont of Mimosa species.</title>
        <authorList>
            <person name="Moulin L."/>
            <person name="Klonowska A."/>
            <person name="Caroline B."/>
            <person name="Booth K."/>
            <person name="Vriezen J.A."/>
            <person name="Melkonian R."/>
            <person name="James E.K."/>
            <person name="Young J.P."/>
            <person name="Bena G."/>
            <person name="Hauser L."/>
            <person name="Land M."/>
            <person name="Kyrpides N."/>
            <person name="Bruce D."/>
            <person name="Chain P."/>
            <person name="Copeland A."/>
            <person name="Pitluck S."/>
            <person name="Woyke T."/>
            <person name="Lizotte-Waniewski M."/>
            <person name="Bristow J."/>
            <person name="Riley M."/>
        </authorList>
    </citation>
    <scope>NUCLEOTIDE SEQUENCE [LARGE SCALE GENOMIC DNA]</scope>
    <source>
        <strain>DSM 17167 / CIP 108236 / LMG 21445 / STM815</strain>
    </source>
</reference>
<name>Y2364_PARP8</name>
<sequence length="257" mass="27988">MTPFEFRQAVRHRDFRGPTAGHCGDYAQANLAILPAAHAHDFLRFCHANPKPCPLLGVGEPGDFRVPVLGRDIDIRTDVPAYNVYRDGELSERVESIETLWQDDFVVFAIGCSFSFEHMLAKEGIGLRHVEEGRNVPMYRTTIANRRAGVFGGELVVSMRPLRGADAIRAVQITSRFPGVHGAPVHIGDPAELGIADLARPEFGDAVTIRAGELPVYWACGVTPQTALMAAKLPLAIAHAPGHMLMTDITNASLAIF</sequence>
<protein>
    <recommendedName>
        <fullName evidence="1">Putative hydro-lyase Bphy_2364</fullName>
        <ecNumber evidence="1">4.2.1.-</ecNumber>
    </recommendedName>
</protein>
<organism>
    <name type="scientific">Paraburkholderia phymatum (strain DSM 17167 / CIP 108236 / LMG 21445 / STM815)</name>
    <name type="common">Burkholderia phymatum</name>
    <dbReference type="NCBI Taxonomy" id="391038"/>
    <lineage>
        <taxon>Bacteria</taxon>
        <taxon>Pseudomonadati</taxon>
        <taxon>Pseudomonadota</taxon>
        <taxon>Betaproteobacteria</taxon>
        <taxon>Burkholderiales</taxon>
        <taxon>Burkholderiaceae</taxon>
        <taxon>Paraburkholderia</taxon>
    </lineage>
</organism>
<comment type="similarity">
    <text evidence="1">Belongs to the D-glutamate cyclase family.</text>
</comment>
<feature type="chain" id="PRO_0000379828" description="Putative hydro-lyase Bphy_2364">
    <location>
        <begin position="1"/>
        <end position="257"/>
    </location>
</feature>
<evidence type="ECO:0000255" key="1">
    <source>
        <dbReference type="HAMAP-Rule" id="MF_01830"/>
    </source>
</evidence>
<proteinExistence type="inferred from homology"/>
<gene>
    <name type="ordered locus">Bphy_2364</name>
</gene>
<dbReference type="EC" id="4.2.1.-" evidence="1"/>
<dbReference type="EMBL" id="CP001043">
    <property type="protein sequence ID" value="ACC71539.1"/>
    <property type="molecule type" value="Genomic_DNA"/>
</dbReference>
<dbReference type="SMR" id="B2JFR4"/>
<dbReference type="STRING" id="391038.Bphy_2364"/>
<dbReference type="KEGG" id="bph:Bphy_2364"/>
<dbReference type="eggNOG" id="COG4336">
    <property type="taxonomic scope" value="Bacteria"/>
</dbReference>
<dbReference type="HOGENOM" id="CLU_059759_0_0_4"/>
<dbReference type="OrthoDB" id="149585at2"/>
<dbReference type="Proteomes" id="UP000001192">
    <property type="component" value="Chromosome 1"/>
</dbReference>
<dbReference type="GO" id="GO:0016829">
    <property type="term" value="F:lyase activity"/>
    <property type="evidence" value="ECO:0007669"/>
    <property type="project" value="UniProtKB-KW"/>
</dbReference>
<dbReference type="FunFam" id="3.30.2040.10:FF:000001">
    <property type="entry name" value="D-glutamate cyclase, mitochondrial"/>
    <property type="match status" value="1"/>
</dbReference>
<dbReference type="Gene3D" id="3.40.1640.10">
    <property type="entry name" value="PSTPO5379-like"/>
    <property type="match status" value="1"/>
</dbReference>
<dbReference type="Gene3D" id="3.30.2040.10">
    <property type="entry name" value="PSTPO5379-like domain"/>
    <property type="match status" value="1"/>
</dbReference>
<dbReference type="HAMAP" id="MF_01830">
    <property type="entry name" value="Hydro_lyase"/>
    <property type="match status" value="1"/>
</dbReference>
<dbReference type="InterPro" id="IPR009906">
    <property type="entry name" value="D-Glu_cyclase"/>
</dbReference>
<dbReference type="InterPro" id="IPR038021">
    <property type="entry name" value="Putative_hydro-lyase"/>
</dbReference>
<dbReference type="InterPro" id="IPR016938">
    <property type="entry name" value="UPF0317"/>
</dbReference>
<dbReference type="NCBIfam" id="NF003969">
    <property type="entry name" value="PRK05463.1"/>
    <property type="match status" value="1"/>
</dbReference>
<dbReference type="PANTHER" id="PTHR32022">
    <property type="entry name" value="D-GLUTAMATE CYCLASE, MITOCHONDRIAL"/>
    <property type="match status" value="1"/>
</dbReference>
<dbReference type="PANTHER" id="PTHR32022:SF10">
    <property type="entry name" value="D-GLUTAMATE CYCLASE, MITOCHONDRIAL"/>
    <property type="match status" value="1"/>
</dbReference>
<dbReference type="Pfam" id="PF07286">
    <property type="entry name" value="D-Glu_cyclase"/>
    <property type="match status" value="1"/>
</dbReference>
<dbReference type="PIRSF" id="PIRSF029755">
    <property type="entry name" value="UCP029755"/>
    <property type="match status" value="1"/>
</dbReference>
<dbReference type="SUPFAM" id="SSF160920">
    <property type="entry name" value="PSTPO5379-like"/>
    <property type="match status" value="1"/>
</dbReference>
<accession>B2JFR4</accession>